<protein>
    <recommendedName>
        <fullName evidence="1">5'-deoxynucleotidase YfbR</fullName>
        <ecNumber evidence="1">3.1.3.89</ecNumber>
    </recommendedName>
    <alternativeName>
        <fullName evidence="1">5'-deoxyribonucleotidase</fullName>
    </alternativeName>
    <alternativeName>
        <fullName evidence="1">Nucleoside 5'-monophosphate phosphohydrolase</fullName>
    </alternativeName>
</protein>
<dbReference type="EC" id="3.1.3.89" evidence="1"/>
<dbReference type="EMBL" id="AE006468">
    <property type="protein sequence ID" value="AAL21233.1"/>
    <property type="molecule type" value="Genomic_DNA"/>
</dbReference>
<dbReference type="RefSeq" id="NP_461274.1">
    <property type="nucleotide sequence ID" value="NC_003197.2"/>
</dbReference>
<dbReference type="RefSeq" id="WP_000813882.1">
    <property type="nucleotide sequence ID" value="NC_003197.2"/>
</dbReference>
<dbReference type="SMR" id="Q8ZNE0"/>
<dbReference type="STRING" id="99287.STM2332"/>
<dbReference type="PaxDb" id="99287-STM2332"/>
<dbReference type="GeneID" id="1253854"/>
<dbReference type="KEGG" id="stm:STM2332"/>
<dbReference type="PATRIC" id="fig|99287.12.peg.2469"/>
<dbReference type="HOGENOM" id="CLU_084784_0_0_6"/>
<dbReference type="OMA" id="NQSHFFA"/>
<dbReference type="PhylomeDB" id="Q8ZNE0"/>
<dbReference type="BioCyc" id="SENT99287:STM2332-MONOMER"/>
<dbReference type="Proteomes" id="UP000001014">
    <property type="component" value="Chromosome"/>
</dbReference>
<dbReference type="GO" id="GO:0005737">
    <property type="term" value="C:cytoplasm"/>
    <property type="evidence" value="ECO:0007669"/>
    <property type="project" value="UniProtKB-SubCell"/>
</dbReference>
<dbReference type="GO" id="GO:0002953">
    <property type="term" value="F:5'-deoxynucleotidase activity"/>
    <property type="evidence" value="ECO:0000318"/>
    <property type="project" value="GO_Central"/>
</dbReference>
<dbReference type="GO" id="GO:0046872">
    <property type="term" value="F:metal ion binding"/>
    <property type="evidence" value="ECO:0007669"/>
    <property type="project" value="UniProtKB-KW"/>
</dbReference>
<dbReference type="GO" id="GO:0000166">
    <property type="term" value="F:nucleotide binding"/>
    <property type="evidence" value="ECO:0007669"/>
    <property type="project" value="UniProtKB-KW"/>
</dbReference>
<dbReference type="FunFam" id="1.10.3210.10:FF:000002">
    <property type="entry name" value="Nucleotidase YfbR"/>
    <property type="match status" value="1"/>
</dbReference>
<dbReference type="Gene3D" id="1.10.3210.10">
    <property type="entry name" value="Hypothetical protein af1432"/>
    <property type="match status" value="1"/>
</dbReference>
<dbReference type="HAMAP" id="MF_01100">
    <property type="entry name" value="5DNU"/>
    <property type="match status" value="1"/>
</dbReference>
<dbReference type="InterPro" id="IPR003607">
    <property type="entry name" value="HD/PDEase_dom"/>
</dbReference>
<dbReference type="InterPro" id="IPR006674">
    <property type="entry name" value="HD_domain"/>
</dbReference>
<dbReference type="InterPro" id="IPR022971">
    <property type="entry name" value="YfbR"/>
</dbReference>
<dbReference type="InterPro" id="IPR039356">
    <property type="entry name" value="YfbR/HDDC2"/>
</dbReference>
<dbReference type="NCBIfam" id="NF003009">
    <property type="entry name" value="PRK03826.1"/>
    <property type="match status" value="1"/>
</dbReference>
<dbReference type="PANTHER" id="PTHR11845">
    <property type="entry name" value="5'-DEOXYNUCLEOTIDASE HDDC2"/>
    <property type="match status" value="1"/>
</dbReference>
<dbReference type="PANTHER" id="PTHR11845:SF13">
    <property type="entry name" value="5'-DEOXYNUCLEOTIDASE HDDC2"/>
    <property type="match status" value="1"/>
</dbReference>
<dbReference type="Pfam" id="PF12917">
    <property type="entry name" value="YfbR-like"/>
    <property type="match status" value="1"/>
</dbReference>
<dbReference type="SMART" id="SM00471">
    <property type="entry name" value="HDc"/>
    <property type="match status" value="1"/>
</dbReference>
<dbReference type="SUPFAM" id="SSF109604">
    <property type="entry name" value="HD-domain/PDEase-like"/>
    <property type="match status" value="1"/>
</dbReference>
<dbReference type="PROSITE" id="PS51831">
    <property type="entry name" value="HD"/>
    <property type="match status" value="1"/>
</dbReference>
<proteinExistence type="inferred from homology"/>
<keyword id="KW-0963">Cytoplasm</keyword>
<keyword id="KW-0378">Hydrolase</keyword>
<keyword id="KW-0479">Metal-binding</keyword>
<keyword id="KW-0547">Nucleotide-binding</keyword>
<keyword id="KW-1185">Reference proteome</keyword>
<feature type="chain" id="PRO_0000095058" description="5'-deoxynucleotidase YfbR">
    <location>
        <begin position="1"/>
        <end position="199"/>
    </location>
</feature>
<feature type="domain" description="HD" evidence="2">
    <location>
        <begin position="30"/>
        <end position="142"/>
    </location>
</feature>
<feature type="binding site" evidence="1">
    <location>
        <begin position="18"/>
        <end position="19"/>
    </location>
    <ligand>
        <name>substrate</name>
    </ligand>
</feature>
<feature type="binding site" evidence="1">
    <location>
        <position position="33"/>
    </location>
    <ligand>
        <name>a divalent metal cation</name>
        <dbReference type="ChEBI" id="CHEBI:60240"/>
    </ligand>
</feature>
<feature type="binding site" evidence="1">
    <location>
        <position position="33"/>
    </location>
    <ligand>
        <name>substrate</name>
    </ligand>
</feature>
<feature type="binding site" evidence="1">
    <location>
        <position position="68"/>
    </location>
    <ligand>
        <name>a divalent metal cation</name>
        <dbReference type="ChEBI" id="CHEBI:60240"/>
    </ligand>
</feature>
<feature type="binding site" evidence="1">
    <location>
        <position position="69"/>
    </location>
    <ligand>
        <name>a divalent metal cation</name>
        <dbReference type="ChEBI" id="CHEBI:60240"/>
    </ligand>
</feature>
<feature type="binding site" evidence="1">
    <location>
        <position position="69"/>
    </location>
    <ligand>
        <name>substrate</name>
    </ligand>
</feature>
<feature type="binding site" evidence="1">
    <location>
        <begin position="77"/>
        <end position="80"/>
    </location>
    <ligand>
        <name>substrate</name>
    </ligand>
</feature>
<feature type="binding site" evidence="1">
    <location>
        <position position="137"/>
    </location>
    <ligand>
        <name>a divalent metal cation</name>
        <dbReference type="ChEBI" id="CHEBI:60240"/>
    </ligand>
</feature>
<feature type="binding site" evidence="1">
    <location>
        <position position="137"/>
    </location>
    <ligand>
        <name>substrate</name>
    </ligand>
</feature>
<feature type="site" description="Appears to be important in orienting the phosphate for catalysis" evidence="1">
    <location>
        <position position="18"/>
    </location>
</feature>
<accession>Q8ZNE0</accession>
<evidence type="ECO:0000255" key="1">
    <source>
        <dbReference type="HAMAP-Rule" id="MF_01100"/>
    </source>
</evidence>
<evidence type="ECO:0000255" key="2">
    <source>
        <dbReference type="PROSITE-ProRule" id="PRU01175"/>
    </source>
</evidence>
<gene>
    <name evidence="1" type="primary">yfbR</name>
    <name type="ordered locus">STM2332</name>
</gene>
<name>5DNU_SALTY</name>
<organism>
    <name type="scientific">Salmonella typhimurium (strain LT2 / SGSC1412 / ATCC 700720)</name>
    <dbReference type="NCBI Taxonomy" id="99287"/>
    <lineage>
        <taxon>Bacteria</taxon>
        <taxon>Pseudomonadati</taxon>
        <taxon>Pseudomonadota</taxon>
        <taxon>Gammaproteobacteria</taxon>
        <taxon>Enterobacterales</taxon>
        <taxon>Enterobacteriaceae</taxon>
        <taxon>Salmonella</taxon>
    </lineage>
</organism>
<sequence>MKQSHFFAHLSRMKLINRWPLMRNVRTENVSEHSLQVAMVAHALAAIKNRKFGGQLNAERIALLAMYHDASEVLTGDLPTPVKYFNSQIAQEYKAIEKIAQQKLVDMAPDELRDIFAPLIDENAWSEEEQAIVKQADALCAYLKCLEELSAGNNEFGLAKTRLEKTLELRRSQEMDYFMAVFVPSFHLSLDEISQDSPL</sequence>
<reference key="1">
    <citation type="journal article" date="2001" name="Nature">
        <title>Complete genome sequence of Salmonella enterica serovar Typhimurium LT2.</title>
        <authorList>
            <person name="McClelland M."/>
            <person name="Sanderson K.E."/>
            <person name="Spieth J."/>
            <person name="Clifton S.W."/>
            <person name="Latreille P."/>
            <person name="Courtney L."/>
            <person name="Porwollik S."/>
            <person name="Ali J."/>
            <person name="Dante M."/>
            <person name="Du F."/>
            <person name="Hou S."/>
            <person name="Layman D."/>
            <person name="Leonard S."/>
            <person name="Nguyen C."/>
            <person name="Scott K."/>
            <person name="Holmes A."/>
            <person name="Grewal N."/>
            <person name="Mulvaney E."/>
            <person name="Ryan E."/>
            <person name="Sun H."/>
            <person name="Florea L."/>
            <person name="Miller W."/>
            <person name="Stoneking T."/>
            <person name="Nhan M."/>
            <person name="Waterston R."/>
            <person name="Wilson R.K."/>
        </authorList>
    </citation>
    <scope>NUCLEOTIDE SEQUENCE [LARGE SCALE GENOMIC DNA]</scope>
    <source>
        <strain>LT2 / SGSC1412 / ATCC 700720</strain>
    </source>
</reference>
<comment type="function">
    <text evidence="1">Catalyzes the strictly specific dephosphorylation of 2'-deoxyribonucleoside 5'-monophosphates.</text>
</comment>
<comment type="catalytic activity">
    <reaction evidence="1">
        <text>a 2'-deoxyribonucleoside 5'-phosphate + H2O = a 2'-deoxyribonucleoside + phosphate</text>
        <dbReference type="Rhea" id="RHEA:36167"/>
        <dbReference type="ChEBI" id="CHEBI:15377"/>
        <dbReference type="ChEBI" id="CHEBI:18274"/>
        <dbReference type="ChEBI" id="CHEBI:43474"/>
        <dbReference type="ChEBI" id="CHEBI:65317"/>
        <dbReference type="EC" id="3.1.3.89"/>
    </reaction>
</comment>
<comment type="cofactor">
    <cofactor evidence="1">
        <name>a divalent metal cation</name>
        <dbReference type="ChEBI" id="CHEBI:60240"/>
    </cofactor>
</comment>
<comment type="subunit">
    <text evidence="1">Homodimer.</text>
</comment>
<comment type="subcellular location">
    <subcellularLocation>
        <location evidence="1">Cytoplasm</location>
    </subcellularLocation>
</comment>
<comment type="similarity">
    <text evidence="1">Belongs to the 5DNU family.</text>
</comment>